<evidence type="ECO:0000250" key="1">
    <source>
        <dbReference type="UniProtKB" id="P21272"/>
    </source>
</evidence>
<evidence type="ECO:0000250" key="2">
    <source>
        <dbReference type="UniProtKB" id="P28033"/>
    </source>
</evidence>
<evidence type="ECO:0000255" key="3">
    <source>
        <dbReference type="PROSITE-ProRule" id="PRU00978"/>
    </source>
</evidence>
<evidence type="ECO:0000256" key="4">
    <source>
        <dbReference type="SAM" id="MobiDB-lite"/>
    </source>
</evidence>
<evidence type="ECO:0000269" key="5">
    <source>
    </source>
</evidence>
<evidence type="ECO:0000269" key="6">
    <source>
    </source>
</evidence>
<evidence type="ECO:0000269" key="7">
    <source>
    </source>
</evidence>
<evidence type="ECO:0000269" key="8">
    <source>
    </source>
</evidence>
<evidence type="ECO:0000269" key="9">
    <source>
    </source>
</evidence>
<evidence type="ECO:0000269" key="10">
    <source>
    </source>
</evidence>
<evidence type="ECO:0000269" key="11">
    <source>
    </source>
</evidence>
<evidence type="ECO:0000269" key="12">
    <source>
    </source>
</evidence>
<evidence type="ECO:0000269" key="13">
    <source>
    </source>
</evidence>
<evidence type="ECO:0000269" key="14">
    <source>
    </source>
</evidence>
<evidence type="ECO:0000269" key="15">
    <source>
    </source>
</evidence>
<evidence type="ECO:0000269" key="16">
    <source>
    </source>
</evidence>
<evidence type="ECO:0000269" key="17">
    <source>
    </source>
</evidence>
<evidence type="ECO:0000269" key="18">
    <source ref="3"/>
</evidence>
<evidence type="ECO:0000303" key="19">
    <source>
    </source>
</evidence>
<evidence type="ECO:0000303" key="20">
    <source>
    </source>
</evidence>
<evidence type="ECO:0000305" key="21"/>
<evidence type="ECO:0000305" key="22">
    <source>
    </source>
</evidence>
<evidence type="ECO:0000305" key="23">
    <source>
    </source>
</evidence>
<evidence type="ECO:0000305" key="24">
    <source>
    </source>
</evidence>
<evidence type="ECO:0000312" key="25">
    <source>
        <dbReference type="HGNC" id="HGNC:1834"/>
    </source>
</evidence>
<evidence type="ECO:0007744" key="26">
    <source>
    </source>
</evidence>
<evidence type="ECO:0007744" key="27">
    <source>
    </source>
</evidence>
<evidence type="ECO:0007744" key="28">
    <source>
    </source>
</evidence>
<evidence type="ECO:0007744" key="29">
    <source>
    </source>
</evidence>
<evidence type="ECO:0007829" key="30">
    <source>
        <dbReference type="PDB" id="1H8A"/>
    </source>
</evidence>
<evidence type="ECO:0007829" key="31">
    <source>
        <dbReference type="PDB" id="6MG1"/>
    </source>
</evidence>
<evidence type="ECO:0007829" key="32">
    <source>
        <dbReference type="PDB" id="7L4V"/>
    </source>
</evidence>
<reference key="1">
    <citation type="journal article" date="1990" name="EMBO J.">
        <title>A nuclear factor for IL-6 expression (NF-IL6) is a member of a C/EBP family.</title>
        <authorList>
            <person name="Akira S."/>
            <person name="Isshiki H."/>
            <person name="Sugita T."/>
            <person name="Tanabe O."/>
            <person name="Kinoshita S."/>
            <person name="Nishio Y."/>
            <person name="Nakajima T."/>
            <person name="Hirano T."/>
            <person name="Kishimoto T."/>
        </authorList>
    </citation>
    <scope>NUCLEOTIDE SEQUENCE [GENOMIC DNA]</scope>
    <scope>FUNCTION</scope>
    <source>
        <tissue>Placenta</tissue>
    </source>
</reference>
<reference key="2">
    <citation type="journal article" date="2004" name="Proc. Natl. Acad. Sci. U.S.A.">
        <title>Large-scale cDNA transfection screening for genes related to cancer development and progression.</title>
        <authorList>
            <person name="Wan D."/>
            <person name="Gong Y."/>
            <person name="Qin W."/>
            <person name="Zhang P."/>
            <person name="Li J."/>
            <person name="Wei L."/>
            <person name="Zhou X."/>
            <person name="Li H."/>
            <person name="Qiu X."/>
            <person name="Zhong F."/>
            <person name="He L."/>
            <person name="Yu J."/>
            <person name="Yao G."/>
            <person name="Jiang H."/>
            <person name="Qian L."/>
            <person name="Yu Y."/>
            <person name="Shu H."/>
            <person name="Chen X."/>
            <person name="Xu H."/>
            <person name="Guo M."/>
            <person name="Pan Z."/>
            <person name="Chen Y."/>
            <person name="Ge C."/>
            <person name="Yang S."/>
            <person name="Gu J."/>
        </authorList>
    </citation>
    <scope>NUCLEOTIDE SEQUENCE [LARGE SCALE MRNA] (ISOFORM 1)</scope>
</reference>
<reference key="3">
    <citation type="submission" date="2002-12" db="EMBL/GenBank/DDBJ databases">
        <authorList>
            <consortium name="SeattleSNPs variation discovery resource"/>
        </authorList>
    </citation>
    <scope>NUCLEOTIDE SEQUENCE [GENOMIC DNA]</scope>
    <scope>VARIANT SER-195</scope>
</reference>
<reference key="4">
    <citation type="journal article" date="2004" name="Nat. Genet.">
        <title>Complete sequencing and characterization of 21,243 full-length human cDNAs.</title>
        <authorList>
            <person name="Ota T."/>
            <person name="Suzuki Y."/>
            <person name="Nishikawa T."/>
            <person name="Otsuki T."/>
            <person name="Sugiyama T."/>
            <person name="Irie R."/>
            <person name="Wakamatsu A."/>
            <person name="Hayashi K."/>
            <person name="Sato H."/>
            <person name="Nagai K."/>
            <person name="Kimura K."/>
            <person name="Makita H."/>
            <person name="Sekine M."/>
            <person name="Obayashi M."/>
            <person name="Nishi T."/>
            <person name="Shibahara T."/>
            <person name="Tanaka T."/>
            <person name="Ishii S."/>
            <person name="Yamamoto J."/>
            <person name="Saito K."/>
            <person name="Kawai Y."/>
            <person name="Isono Y."/>
            <person name="Nakamura Y."/>
            <person name="Nagahari K."/>
            <person name="Murakami K."/>
            <person name="Yasuda T."/>
            <person name="Iwayanagi T."/>
            <person name="Wagatsuma M."/>
            <person name="Shiratori A."/>
            <person name="Sudo H."/>
            <person name="Hosoiri T."/>
            <person name="Kaku Y."/>
            <person name="Kodaira H."/>
            <person name="Kondo H."/>
            <person name="Sugawara M."/>
            <person name="Takahashi M."/>
            <person name="Kanda K."/>
            <person name="Yokoi T."/>
            <person name="Furuya T."/>
            <person name="Kikkawa E."/>
            <person name="Omura Y."/>
            <person name="Abe K."/>
            <person name="Kamihara K."/>
            <person name="Katsuta N."/>
            <person name="Sato K."/>
            <person name="Tanikawa M."/>
            <person name="Yamazaki M."/>
            <person name="Ninomiya K."/>
            <person name="Ishibashi T."/>
            <person name="Yamashita H."/>
            <person name="Murakawa K."/>
            <person name="Fujimori K."/>
            <person name="Tanai H."/>
            <person name="Kimata M."/>
            <person name="Watanabe M."/>
            <person name="Hiraoka S."/>
            <person name="Chiba Y."/>
            <person name="Ishida S."/>
            <person name="Ono Y."/>
            <person name="Takiguchi S."/>
            <person name="Watanabe S."/>
            <person name="Yosida M."/>
            <person name="Hotuta T."/>
            <person name="Kusano J."/>
            <person name="Kanehori K."/>
            <person name="Takahashi-Fujii A."/>
            <person name="Hara H."/>
            <person name="Tanase T.-O."/>
            <person name="Nomura Y."/>
            <person name="Togiya S."/>
            <person name="Komai F."/>
            <person name="Hara R."/>
            <person name="Takeuchi K."/>
            <person name="Arita M."/>
            <person name="Imose N."/>
            <person name="Musashino K."/>
            <person name="Yuuki H."/>
            <person name="Oshima A."/>
            <person name="Sasaki N."/>
            <person name="Aotsuka S."/>
            <person name="Yoshikawa Y."/>
            <person name="Matsunawa H."/>
            <person name="Ichihara T."/>
            <person name="Shiohata N."/>
            <person name="Sano S."/>
            <person name="Moriya S."/>
            <person name="Momiyama H."/>
            <person name="Satoh N."/>
            <person name="Takami S."/>
            <person name="Terashima Y."/>
            <person name="Suzuki O."/>
            <person name="Nakagawa S."/>
            <person name="Senoh A."/>
            <person name="Mizoguchi H."/>
            <person name="Goto Y."/>
            <person name="Shimizu F."/>
            <person name="Wakebe H."/>
            <person name="Hishigaki H."/>
            <person name="Watanabe T."/>
            <person name="Sugiyama A."/>
            <person name="Takemoto M."/>
            <person name="Kawakami B."/>
            <person name="Yamazaki M."/>
            <person name="Watanabe K."/>
            <person name="Kumagai A."/>
            <person name="Itakura S."/>
            <person name="Fukuzumi Y."/>
            <person name="Fujimori Y."/>
            <person name="Komiyama M."/>
            <person name="Tashiro H."/>
            <person name="Tanigami A."/>
            <person name="Fujiwara T."/>
            <person name="Ono T."/>
            <person name="Yamada K."/>
            <person name="Fujii Y."/>
            <person name="Ozaki K."/>
            <person name="Hirao M."/>
            <person name="Ohmori Y."/>
            <person name="Kawabata A."/>
            <person name="Hikiji T."/>
            <person name="Kobatake N."/>
            <person name="Inagaki H."/>
            <person name="Ikema Y."/>
            <person name="Okamoto S."/>
            <person name="Okitani R."/>
            <person name="Kawakami T."/>
            <person name="Noguchi S."/>
            <person name="Itoh T."/>
            <person name="Shigeta K."/>
            <person name="Senba T."/>
            <person name="Matsumura K."/>
            <person name="Nakajima Y."/>
            <person name="Mizuno T."/>
            <person name="Morinaga M."/>
            <person name="Sasaki M."/>
            <person name="Togashi T."/>
            <person name="Oyama M."/>
            <person name="Hata H."/>
            <person name="Watanabe M."/>
            <person name="Komatsu T."/>
            <person name="Mizushima-Sugano J."/>
            <person name="Satoh T."/>
            <person name="Shirai Y."/>
            <person name="Takahashi Y."/>
            <person name="Nakagawa K."/>
            <person name="Okumura K."/>
            <person name="Nagase T."/>
            <person name="Nomura N."/>
            <person name="Kikuchi H."/>
            <person name="Masuho Y."/>
            <person name="Yamashita R."/>
            <person name="Nakai K."/>
            <person name="Yada T."/>
            <person name="Nakamura Y."/>
            <person name="Ohara O."/>
            <person name="Isogai T."/>
            <person name="Sugano S."/>
        </authorList>
    </citation>
    <scope>NUCLEOTIDE SEQUENCE [LARGE SCALE MRNA] (ISOFORM 1)</scope>
    <source>
        <tissue>Placenta</tissue>
    </source>
</reference>
<reference key="5">
    <citation type="journal article" date="2001" name="Nature">
        <title>The DNA sequence and comparative analysis of human chromosome 20.</title>
        <authorList>
            <person name="Deloukas P."/>
            <person name="Matthews L.H."/>
            <person name="Ashurst J.L."/>
            <person name="Burton J."/>
            <person name="Gilbert J.G.R."/>
            <person name="Jones M."/>
            <person name="Stavrides G."/>
            <person name="Almeida J.P."/>
            <person name="Babbage A.K."/>
            <person name="Bagguley C.L."/>
            <person name="Bailey J."/>
            <person name="Barlow K.F."/>
            <person name="Bates K.N."/>
            <person name="Beard L.M."/>
            <person name="Beare D.M."/>
            <person name="Beasley O.P."/>
            <person name="Bird C.P."/>
            <person name="Blakey S.E."/>
            <person name="Bridgeman A.M."/>
            <person name="Brown A.J."/>
            <person name="Buck D."/>
            <person name="Burrill W.D."/>
            <person name="Butler A.P."/>
            <person name="Carder C."/>
            <person name="Carter N.P."/>
            <person name="Chapman J.C."/>
            <person name="Clamp M."/>
            <person name="Clark G."/>
            <person name="Clark L.N."/>
            <person name="Clark S.Y."/>
            <person name="Clee C.M."/>
            <person name="Clegg S."/>
            <person name="Cobley V.E."/>
            <person name="Collier R.E."/>
            <person name="Connor R.E."/>
            <person name="Corby N.R."/>
            <person name="Coulson A."/>
            <person name="Coville G.J."/>
            <person name="Deadman R."/>
            <person name="Dhami P.D."/>
            <person name="Dunn M."/>
            <person name="Ellington A.G."/>
            <person name="Frankland J.A."/>
            <person name="Fraser A."/>
            <person name="French L."/>
            <person name="Garner P."/>
            <person name="Grafham D.V."/>
            <person name="Griffiths C."/>
            <person name="Griffiths M.N.D."/>
            <person name="Gwilliam R."/>
            <person name="Hall R.E."/>
            <person name="Hammond S."/>
            <person name="Harley J.L."/>
            <person name="Heath P.D."/>
            <person name="Ho S."/>
            <person name="Holden J.L."/>
            <person name="Howden P.J."/>
            <person name="Huckle E."/>
            <person name="Hunt A.R."/>
            <person name="Hunt S.E."/>
            <person name="Jekosch K."/>
            <person name="Johnson C.M."/>
            <person name="Johnson D."/>
            <person name="Kay M.P."/>
            <person name="Kimberley A.M."/>
            <person name="King A."/>
            <person name="Knights A."/>
            <person name="Laird G.K."/>
            <person name="Lawlor S."/>
            <person name="Lehvaeslaiho M.H."/>
            <person name="Leversha M.A."/>
            <person name="Lloyd C."/>
            <person name="Lloyd D.M."/>
            <person name="Lovell J.D."/>
            <person name="Marsh V.L."/>
            <person name="Martin S.L."/>
            <person name="McConnachie L.J."/>
            <person name="McLay K."/>
            <person name="McMurray A.A."/>
            <person name="Milne S.A."/>
            <person name="Mistry D."/>
            <person name="Moore M.J.F."/>
            <person name="Mullikin J.C."/>
            <person name="Nickerson T."/>
            <person name="Oliver K."/>
            <person name="Parker A."/>
            <person name="Patel R."/>
            <person name="Pearce T.A.V."/>
            <person name="Peck A.I."/>
            <person name="Phillimore B.J.C.T."/>
            <person name="Prathalingam S.R."/>
            <person name="Plumb R.W."/>
            <person name="Ramsay H."/>
            <person name="Rice C.M."/>
            <person name="Ross M.T."/>
            <person name="Scott C.E."/>
            <person name="Sehra H.K."/>
            <person name="Shownkeen R."/>
            <person name="Sims S."/>
            <person name="Skuce C.D."/>
            <person name="Smith M.L."/>
            <person name="Soderlund C."/>
            <person name="Steward C.A."/>
            <person name="Sulston J.E."/>
            <person name="Swann R.M."/>
            <person name="Sycamore N."/>
            <person name="Taylor R."/>
            <person name="Tee L."/>
            <person name="Thomas D.W."/>
            <person name="Thorpe A."/>
            <person name="Tracey A."/>
            <person name="Tromans A.C."/>
            <person name="Vaudin M."/>
            <person name="Wall M."/>
            <person name="Wallis J.M."/>
            <person name="Whitehead S.L."/>
            <person name="Whittaker P."/>
            <person name="Willey D.L."/>
            <person name="Williams L."/>
            <person name="Williams S.A."/>
            <person name="Wilming L."/>
            <person name="Wray P.W."/>
            <person name="Hubbard T."/>
            <person name="Durbin R.M."/>
            <person name="Bentley D.R."/>
            <person name="Beck S."/>
            <person name="Rogers J."/>
        </authorList>
    </citation>
    <scope>NUCLEOTIDE SEQUENCE [LARGE SCALE GENOMIC DNA]</scope>
</reference>
<reference key="6">
    <citation type="submission" date="2005-09" db="EMBL/GenBank/DDBJ databases">
        <authorList>
            <person name="Mural R.J."/>
            <person name="Istrail S."/>
            <person name="Sutton G.G."/>
            <person name="Florea L."/>
            <person name="Halpern A.L."/>
            <person name="Mobarry C.M."/>
            <person name="Lippert R."/>
            <person name="Walenz B."/>
            <person name="Shatkay H."/>
            <person name="Dew I."/>
            <person name="Miller J.R."/>
            <person name="Flanigan M.J."/>
            <person name="Edwards N.J."/>
            <person name="Bolanos R."/>
            <person name="Fasulo D."/>
            <person name="Halldorsson B.V."/>
            <person name="Hannenhalli S."/>
            <person name="Turner R."/>
            <person name="Yooseph S."/>
            <person name="Lu F."/>
            <person name="Nusskern D.R."/>
            <person name="Shue B.C."/>
            <person name="Zheng X.H."/>
            <person name="Zhong F."/>
            <person name="Delcher A.L."/>
            <person name="Huson D.H."/>
            <person name="Kravitz S.A."/>
            <person name="Mouchard L."/>
            <person name="Reinert K."/>
            <person name="Remington K.A."/>
            <person name="Clark A.G."/>
            <person name="Waterman M.S."/>
            <person name="Eichler E.E."/>
            <person name="Adams M.D."/>
            <person name="Hunkapiller M.W."/>
            <person name="Myers E.W."/>
            <person name="Venter J.C."/>
        </authorList>
    </citation>
    <scope>NUCLEOTIDE SEQUENCE [LARGE SCALE GENOMIC DNA]</scope>
</reference>
<reference key="7">
    <citation type="journal article" date="2004" name="Genome Res.">
        <title>The status, quality, and expansion of the NIH full-length cDNA project: the Mammalian Gene Collection (MGC).</title>
        <authorList>
            <consortium name="The MGC Project Team"/>
        </authorList>
    </citation>
    <scope>NUCLEOTIDE SEQUENCE [LARGE SCALE MRNA] (ISOFORM 1)</scope>
    <source>
        <tissue>Muscle</tissue>
        <tissue>Skin</tissue>
    </source>
</reference>
<reference key="8">
    <citation type="journal article" date="1995" name="Eur. J. Biochem.">
        <title>Identification of a transcriptional regulatory factor for human aromatase cytochrome P450 gene expression as nuclear factor interleukin-6 (NF-IL6), a member of the CCAAT/enhancer-binding protein family.</title>
        <authorList>
            <person name="Toda K."/>
            <person name="Akira S."/>
            <person name="Kishimoto T."/>
            <person name="Sasaki H."/>
            <person name="Hashimoto K."/>
            <person name="Yamamoto Y."/>
            <person name="Sagara Y."/>
            <person name="Shizuta Y."/>
        </authorList>
    </citation>
    <scope>NUCLEOTIDE SEQUENCE [MRNA] OF 241-323 (ISOFORMS 1/2/3)</scope>
</reference>
<reference key="9">
    <citation type="journal article" date="1992" name="Proc. Natl. Acad. Sci. U.S.A.">
        <title>A member of the C/EBP family, NF-IL6 beta, forms a heterodimer and transcriptionally synergizes with NF-IL6.</title>
        <authorList>
            <person name="Kinoshita S."/>
            <person name="Akira S."/>
            <person name="Kishimoto T."/>
        </authorList>
    </citation>
    <scope>FUNCTION</scope>
    <scope>INTERACTION WITH CEBPD</scope>
</reference>
<reference key="10">
    <citation type="journal article" date="1997" name="J. Biol. Chem.">
        <title>Antioxidant-induced nuclear translocation of CCAAT/enhancer-binding protein beta. A critical role for protein kinase A-mediated phosphorylation of Ser299.</title>
        <authorList>
            <person name="Chinery R."/>
            <person name="Brockman J.A."/>
            <person name="Dransfield D.T."/>
            <person name="Coffey R.J."/>
        </authorList>
    </citation>
    <scope>FUNCTION</scope>
    <scope>PHOSPHORYLATION AT SER-288</scope>
    <scope>MUTAGENESIS OF SER-288</scope>
    <scope>SUBCELLULAR LOCATION</scope>
</reference>
<reference key="11">
    <citation type="journal article" date="2001" name="J. Biol. Chem.">
        <title>Crystal structure of the CCAAT box/enhancer-binding protein beta activating transcription factor-4 basic leucine zipper heterodimer in the absence of DNA.</title>
        <authorList>
            <person name="Podust L.M."/>
            <person name="Krezel A.M."/>
            <person name="Kim Y."/>
        </authorList>
    </citation>
    <scope>INTERACTION WITH ATF4</scope>
    <scope>DNA-BINDING</scope>
</reference>
<reference key="12">
    <citation type="journal article" date="2001" name="Mol. Cell">
        <title>C/EBPbeta phosphorylation by RSK creates a functional XEXD caspase inhibitory box critical for cell survival.</title>
        <authorList>
            <person name="Buck M."/>
            <person name="Poli V."/>
            <person name="Hunter T."/>
            <person name="Chojkier M."/>
        </authorList>
    </citation>
    <scope>PHOSPHORYLATION AT THR-235</scope>
</reference>
<reference key="13">
    <citation type="journal article" date="2002" name="J. Biol. Chem.">
        <title>Dynamic regulation of cyclooxygenase-2 promoter activity by isoforms of CCAAT/enhancer-binding proteins.</title>
        <authorList>
            <person name="Zhu Y."/>
            <person name="Saunders M.A."/>
            <person name="Yeh H."/>
            <person name="Deng W.G."/>
            <person name="Wu K.K."/>
        </authorList>
    </citation>
    <scope>FUNCTION (ISOFORM 3)</scope>
    <scope>ALTERNATIVE SPLICING (ISOFORMS 1; 2 AND 3)</scope>
    <scope>DNA-BINDING</scope>
</reference>
<reference key="14">
    <citation type="journal article" date="2002" name="Proc. Natl. Acad. Sci. U.S.A.">
        <title>MEKK1 plays a critical role in activating the transcription factor C/EBP-beta-dependent gene expression in response to IFN-gamma.</title>
        <authorList>
            <person name="Roy S.K."/>
            <person name="Hu J."/>
            <person name="Meng Q."/>
            <person name="Xia Y."/>
            <person name="Shapiro P.S."/>
            <person name="Reddy S.P."/>
            <person name="Platanias L.C."/>
            <person name="Lindner D.J."/>
            <person name="Johnson P.F."/>
            <person name="Pritchard C."/>
            <person name="Pages G."/>
            <person name="Pouyssegur J."/>
            <person name="Kalvakolanu D.V."/>
        </authorList>
    </citation>
    <scope>FUNCTION</scope>
    <scope>MUTAGENESIS OF THR-235</scope>
</reference>
<reference key="15">
    <citation type="journal article" date="2003" name="J. Biol. Chem.">
        <title>Modification of CCAAT/enhancer-binding protein-beta by the small ubiquitin-like modifier (SUMO) family members, SUMO-2 and SUMO-3.</title>
        <authorList>
            <person name="Eaton E.M."/>
            <person name="Sealy L."/>
        </authorList>
    </citation>
    <scope>SUMOYLATION AT LYS-174</scope>
</reference>
<reference key="16">
    <citation type="journal article" date="2007" name="Genomics">
        <title>Nine-amino-acid transactivation domain: establishment and prediction utilities.</title>
        <authorList>
            <person name="Piskacek S."/>
            <person name="Gregor M."/>
            <person name="Nemethova M."/>
            <person name="Grabner M."/>
            <person name="Kovarik P."/>
            <person name="Piskacek M."/>
        </authorList>
    </citation>
    <scope>DOMAIN</scope>
</reference>
<reference key="17">
    <citation type="journal article" date="2008" name="J. Biol. Chem.">
        <title>G9a-mediated lysine methylation alters the function of CCAAT/enhancer-binding protein-beta.</title>
        <authorList>
            <person name="Pless O."/>
            <person name="Kowenz-Leutz E."/>
            <person name="Knoblich M."/>
            <person name="Lausen J."/>
            <person name="Beyermann M."/>
            <person name="Walsh M.J."/>
            <person name="Leutz A."/>
        </authorList>
    </citation>
    <scope>FUNCTION</scope>
    <scope>PHOSPHORYLATION AT THR-235</scope>
</reference>
<reference key="18">
    <citation type="journal article" date="2009" name="Anal. Chem.">
        <title>Lys-N and trypsin cover complementary parts of the phosphoproteome in a refined SCX-based approach.</title>
        <authorList>
            <person name="Gauci S."/>
            <person name="Helbig A.O."/>
            <person name="Slijper M."/>
            <person name="Krijgsveld J."/>
            <person name="Heck A.J."/>
            <person name="Mohammed S."/>
        </authorList>
    </citation>
    <scope>IDENTIFICATION BY MASS SPECTROMETRY [LARGE SCALE ANALYSIS]</scope>
</reference>
<reference key="19">
    <citation type="journal article" date="2010" name="EMBO J.">
        <title>Crosstalk between C/EBPbeta phosphorylation, arginine methylation, and SWI/SNF/Mediator implies an indexing transcription factor code.</title>
        <authorList>
            <person name="Kowenz-Leutz E."/>
            <person name="Pless O."/>
            <person name="Dittmar G."/>
            <person name="Knoblich M."/>
            <person name="Leutz A."/>
        </authorList>
    </citation>
    <scope>INTERACTION WITH MED23; MED26; SMARCA2; SMARCB1 AND SMARCC1</scope>
    <scope>METHYLATION AT ARG-3</scope>
</reference>
<reference key="20">
    <citation type="journal article" date="2010" name="J. Biol. Chem.">
        <title>Endoplasmic reticulum stress-activated C/EBP homologous protein enhances nuclear factor-kappaB signals via repression of peroxisome proliferator-activated receptor gamma.</title>
        <authorList>
            <person name="Park S.H."/>
            <person name="Choi H.J."/>
            <person name="Yang H."/>
            <person name="Do K.H."/>
            <person name="Kim J."/>
            <person name="Lee D.W."/>
            <person name="Moon Y."/>
        </authorList>
    </citation>
    <scope>FUNCTION</scope>
    <scope>INTERACTION WITH DDIT3</scope>
    <scope>SUBCELLULAR LOCATION</scope>
    <scope>INDUCTION</scope>
</reference>
<reference key="21">
    <citation type="journal article" date="2014" name="Nat. Struct. Mol. Biol.">
        <title>Uncovering global SUMOylation signaling networks in a site-specific manner.</title>
        <authorList>
            <person name="Hendriks I.A."/>
            <person name="D'Souza R.C."/>
            <person name="Yang B."/>
            <person name="Verlaan-de Vries M."/>
            <person name="Mann M."/>
            <person name="Vertegaal A.C."/>
        </authorList>
    </citation>
    <scope>SUMOYLATION [LARGE SCALE ANALYSIS] AT LYS-133; LYS-174; LYS-187 AND LYS-260</scope>
    <scope>IDENTIFICATION BY MASS SPECTROMETRY [LARGE SCALE ANALYSIS]</scope>
</reference>
<reference key="22">
    <citation type="journal article" date="2015" name="Cell Rep.">
        <title>SUMO-2 orchestrates chromatin modifiers in response to DNA damage.</title>
        <authorList>
            <person name="Hendriks I.A."/>
            <person name="Treffers L.W."/>
            <person name="Verlaan-de Vries M."/>
            <person name="Olsen J.V."/>
            <person name="Vertegaal A.C."/>
        </authorList>
    </citation>
    <scope>SUMOYLATION [LARGE SCALE ANALYSIS] AT LYS-133; LYS-174; LYS-187 AND LYS-260</scope>
    <scope>IDENTIFICATION BY MASS SPECTROMETRY [LARGE SCALE ANALYSIS]</scope>
</reference>
<reference key="23">
    <citation type="journal article" date="2015" name="J. Biol. Chem.">
        <title>Transcriptional Regulation of Adipocyte Differentiation: A Central Role for CCAAT/Enhancer-binding Protein (C/EBP) beta.</title>
        <authorList>
            <person name="Guo L."/>
            <person name="Li X."/>
            <person name="Tang Q."/>
        </authorList>
    </citation>
    <scope>REVIEW OF PTMS AND FUNCTION</scope>
</reference>
<reference key="24">
    <citation type="journal article" date="2015" name="Mol. Cell. Proteomics">
        <title>System-wide analysis of SUMOylation dynamics in response to replication stress reveals novel small ubiquitin-like modified target proteins and acceptor lysines relevant for genome stability.</title>
        <authorList>
            <person name="Xiao Z."/>
            <person name="Chang J.G."/>
            <person name="Hendriks I.A."/>
            <person name="Sigurdsson J.O."/>
            <person name="Olsen J.V."/>
            <person name="Vertegaal A.C."/>
        </authorList>
    </citation>
    <scope>SUMOYLATION [LARGE SCALE ANALYSIS] AT LYS-174</scope>
    <scope>IDENTIFICATION BY MASS SPECTROMETRY [LARGE SCALE ANALYSIS]</scope>
</reference>
<reference key="25">
    <citation type="journal article" date="2016" name="PLoS Genet.">
        <title>Comparative Transcriptomic and Epigenomic Analyses Reveal New Regulators of Murine Brown Adipogenesis.</title>
        <authorList>
            <person name="Brunmeir R."/>
            <person name="Wu J."/>
            <person name="Peng X."/>
            <person name="Kim S.Y."/>
            <person name="Julien S.G."/>
            <person name="Zhang Q."/>
            <person name="Xie W."/>
            <person name="Xu F."/>
        </authorList>
    </citation>
    <scope>INTERACTION WITH SIX1</scope>
</reference>
<reference key="26">
    <citation type="journal article" date="2017" name="Nat. Struct. Mol. Biol.">
        <title>Site-specific mapping of the human SUMO proteome reveals co-modification with phosphorylation.</title>
        <authorList>
            <person name="Hendriks I.A."/>
            <person name="Lyon D."/>
            <person name="Young C."/>
            <person name="Jensen L.J."/>
            <person name="Vertegaal A.C."/>
            <person name="Nielsen M.L."/>
        </authorList>
    </citation>
    <scope>SUMOYLATION [LARGE SCALE ANALYSIS] AT LYS-133; LYS-174; LYS-185; LYS-187; LYS-260; LYS-262 AND LYS-332</scope>
    <scope>IDENTIFICATION BY MASS SPECTROMETRY [LARGE SCALE ANALYSIS]</scope>
</reference>
<reference key="27">
    <citation type="journal article" date="2001" name="Cell">
        <title>Structural analyses of DNA recognition by the AML1/Runx-1 Runt domain and its allosteric control by CBFbeta.</title>
        <authorList>
            <person name="Tahirov T.H."/>
            <person name="Inoue-Bungo T."/>
            <person name="Morii H."/>
            <person name="Fujikawa A."/>
            <person name="Sasaki M."/>
            <person name="Kimura K."/>
            <person name="Shiina M."/>
            <person name="Sato K."/>
            <person name="Kumasaka T."/>
            <person name="Yamamoto M."/>
            <person name="Ishii S."/>
            <person name="Ogata K."/>
        </authorList>
    </citation>
    <scope>X-RAY CRYSTALLOGRAPHY (3.00 ANGSTROMS) OF 259-336 IN COMPLEXES WITH DNA</scope>
    <scope>SUBUNIT</scope>
</reference>
<reference key="28">
    <citation type="journal article" date="2002" name="Cell">
        <title>Mechanism of c-Myb-C/EBP beta cooperation from separated sites on a promoter.</title>
        <authorList>
            <person name="Tahirov T.H."/>
            <person name="Sato K."/>
            <person name="Ichikawa-Iwata E."/>
            <person name="Sasaki M."/>
            <person name="Inoue-Bungo T."/>
            <person name="Shiina M."/>
            <person name="Kimura K."/>
            <person name="Takata S."/>
            <person name="Fujikawa A."/>
            <person name="Morii H."/>
            <person name="Kumasaka T."/>
            <person name="Yamamoto M."/>
            <person name="Ishii S."/>
            <person name="Ogata K."/>
        </authorList>
    </citation>
    <scope>X-RAY CRYSTALLOGRAPHY (2.23 ANGSTROMS) OF 259-345 IN COMPLEX WITH MOUSE MYB</scope>
    <scope>SUBUNIT</scope>
    <scope>INTERACTION WITH MYB</scope>
    <scope>DNA-BINDING</scope>
</reference>
<comment type="function">
    <text evidence="1 2 10 13 15 17 20">Important transcription factor regulating the expression of genes involved in immune and inflammatory responses (PubMed:12048245, PubMed:1741402, PubMed:18647749, PubMed:9374525). Also plays a significant role in adipogenesis, as well as in the gluconeogenic pathway, liver regeneration, and hematopoiesis. The consensus recognition site is 5'-T[TG]NNGNAA[TG]-3'. Its functional capacity is governed by protein interactions and post-translational protein modifications. During early embryogenesis, plays essential and redundant roles with CEBPA. Has a promitotic effect on many cell types such as hepatocytes and adipocytes but has an antiproliferative effect on T-cells by repressing MYC expression, facilitating differentiation along the T-helper 2 lineage. Binds to regulatory regions of several acute-phase and cytokines genes and plays a role in the regulation of acute-phase reaction and inflammation. Also plays a role in intracellular bacteria killing (By similarity). During adipogenesis, is rapidly expressed and, after activation by phosphorylation, induces CEBPA and PPARG, which turn on the series of adipocyte genes that give rise to the adipocyte phenotype. The delayed transactivation of the CEBPA and PPARG genes by CEBPB appears necessary to allow mitotic clonal expansion and thereby progression of terminal differentiation (PubMed:20829347). Essential for female reproduction because of a critical role in ovarian follicle development (By similarity). Restricts osteoclastogenesis: together with NFE2L1; represses expression of DSPP during odontoblast differentiation (By similarity).</text>
</comment>
<comment type="function">
    <molecule>Isoform 2</molecule>
    <text evidence="2">Essential for gene expression induction in activated macrophages. Plays a major role in immune responses such as CD4(+) T-cell response, granuloma formation and endotoxin shock. Not essential for intracellular bacteria killing.</text>
</comment>
<comment type="function">
    <molecule>Isoform 3</molecule>
    <text evidence="1 2 8">Acts as a dominant negative through heterodimerization with isoform 2 (PubMed:11741938). Promotes osteoblast differentiation and osteoclastogenesis (By similarity).</text>
</comment>
<comment type="subunit">
    <text evidence="1 2 5 6 9 14 15 16">Binds DNA as a homodimer and as a heterodimer (PubMed:11018027, PubMed:11257229, PubMed:11792321). Interacts with ATF4. Binds DNA as a heterodimer with ATF4 (PubMed:11018027). Interacts with MYB; within the complex, MYB and CEBPB bind to different promoter regions (PubMed:11792321). Can form stable heterodimers with CEBPD (PubMed:1741402). Can form stable heterodimers with CEBPA and CEBPE (By similarity). Interacts with SIX1 (PubMed:27923061). Isoform 2 and isoform 3 also form heterodimers. Interacts with TRIM28 and PTGES2. Interacts with PRDM16. Interacts with CCDC85B. Forms a complex with THOC5. Interacts with ZNF638; this interaction increases transcriptional activation. Interacts with CIDEA and CIDEC; these interactions increase transcriptional activation of a subset of CEBPB downstream target genes (By similarity). Interacts with DDIT3/CHOP (PubMed:20829347). Interacts with EP300; recruits EP300 to chromatin. Interacts with RORA; the interaction disrupts interaction with EP300. Interacts (not methylated) with MED23, MED26, SMARCA2, SMARCB1 and SMARCC1 (PubMed:20111005). Interacts with KAT2A and KAT2B (By similarity). Interacts with ATF5; EP300 is required for ATF5 and CEBPB interaction and DNA binding (By similarity). Interacts with NFE2L1; the heterodimer represses expression of DSPP during odontoblast differentiation (By similarity).</text>
</comment>
<comment type="interaction">
    <interactant intactId="EBI-969696">
        <id>P17676</id>
    </interactant>
    <interactant intactId="EBI-492498">
        <id>P18848</id>
        <label>ATF4</label>
    </interactant>
    <organismsDiffer>false</organismsDiffer>
    <experiments>2</experiments>
</comment>
<comment type="interaction">
    <interactant intactId="EBI-969696">
        <id>P17676</id>
    </interactant>
    <interactant intactId="EBI-749503">
        <id>Q16520</id>
        <label>BATF</label>
    </interactant>
    <organismsDiffer>false</organismsDiffer>
    <experiments>2</experiments>
</comment>
<comment type="interaction">
    <interactant intactId="EBI-969696">
        <id>P17676</id>
    </interactant>
    <interactant intactId="EBI-2339854">
        <id>Q86X55</id>
        <label>CARM1</label>
    </interactant>
    <organismsDiffer>false</organismsDiffer>
    <experiments>2</experiments>
</comment>
<comment type="interaction">
    <interactant intactId="EBI-969696">
        <id>P17676</id>
    </interactant>
    <interactant intactId="EBI-1172054">
        <id>P49715</id>
        <label>CEBPA</label>
    </interactant>
    <organismsDiffer>false</organismsDiffer>
    <experiments>2</experiments>
</comment>
<comment type="interaction">
    <interactant intactId="EBI-969696">
        <id>P17676</id>
    </interactant>
    <interactant intactId="EBI-740209">
        <id>P53567</id>
        <label>CEBPG</label>
    </interactant>
    <organismsDiffer>false</organismsDiffer>
    <experiments>2</experiments>
</comment>
<comment type="interaction">
    <interactant intactId="EBI-969696">
        <id>P17676</id>
    </interactant>
    <interactant intactId="EBI-742651">
        <id>P35638</id>
        <label>DDIT3</label>
    </interactant>
    <organismsDiffer>false</organismsDiffer>
    <experiments>3</experiments>
</comment>
<comment type="interaction">
    <interactant intactId="EBI-969696">
        <id>P17676</id>
    </interactant>
    <interactant intactId="EBI-78473">
        <id>P03372</id>
        <label>ESR1</label>
    </interactant>
    <organismsDiffer>false</organismsDiffer>
    <experiments>2</experiments>
</comment>
<comment type="interaction">
    <interactant intactId="EBI-969696">
        <id>P17676</id>
    </interactant>
    <interactant intactId="EBI-10053698">
        <id>PRO_0000317447</id>
        <label>MUC1</label>
        <dbReference type="UniProtKB" id="P15941"/>
    </interactant>
    <organismsDiffer>false</organismsDiffer>
    <experiments>8</experiments>
</comment>
<comment type="interaction">
    <interactant intactId="EBI-969696">
        <id>P17676</id>
    </interactant>
    <interactant intactId="EBI-366083">
        <id>P04637</id>
        <label>TP53</label>
    </interactant>
    <organismsDiffer>false</organismsDiffer>
    <experiments>4</experiments>
</comment>
<comment type="interaction">
    <interactant intactId="EBI-969696">
        <id>P17676</id>
    </interactant>
    <interactant intactId="EBI-1779322">
        <id>P03120</id>
        <label>E2</label>
    </interactant>
    <organismsDiffer>true</organismsDiffer>
    <experiments>2</experiments>
</comment>
<comment type="interaction">
    <interactant intactId="EBI-969696">
        <id>P17676</id>
    </interactant>
    <interactant intactId="EBI-7028618">
        <id>P03122</id>
        <label>E2</label>
    </interactant>
    <organismsDiffer>true</organismsDiffer>
    <experiments>3</experiments>
</comment>
<comment type="interaction">
    <interactant intactId="EBI-969696">
        <id>P17676</id>
    </interactant>
    <interactant intactId="EBI-7136851">
        <id>P06422</id>
        <label>E2</label>
    </interactant>
    <organismsDiffer>true</organismsDiffer>
    <experiments>4</experiments>
</comment>
<comment type="interaction">
    <interactant intactId="EBI-969696">
        <id>P17676</id>
    </interactant>
    <interactant intactId="EBI-7010629">
        <id>P06790</id>
        <label>E2</label>
    </interactant>
    <organismsDiffer>true</organismsDiffer>
    <experiments>4</experiments>
</comment>
<comment type="interaction">
    <interactant intactId="EBI-9997012">
        <id>P17676-1</id>
    </interactant>
    <interactant intactId="EBI-80140">
        <id>P63165</id>
        <label>SUMO1</label>
    </interactant>
    <organismsDiffer>false</organismsDiffer>
    <experiments>5</experiments>
</comment>
<comment type="subcellular location">
    <subcellularLocation>
        <location evidence="15">Nucleus</location>
    </subcellularLocation>
    <subcellularLocation>
        <location evidence="17">Cytoplasm</location>
    </subcellularLocation>
    <text evidence="2 17">Translocates to the nucleus when phosphorylated at Ser-288. In T-cells when sumoylated drawn to pericentric heterochromatin thereby allowing proliferation (By similarity).</text>
</comment>
<comment type="alternative products">
    <event type="alternative initiation"/>
    <isoform>
        <id>P17676-1</id>
        <name>1</name>
        <name>C/EBPbeta-FL</name>
        <sequence type="displayed"/>
    </isoform>
    <isoform>
        <id>P17676-2</id>
        <name>2</name>
        <name>C/EBPbeta-LAP</name>
        <sequence type="described" ref="VSP_053314"/>
    </isoform>
    <isoform>
        <id>P17676-3</id>
        <name>3</name>
        <name>C/EBPbeta-LIP</name>
        <sequence type="described" ref="VSP_053313"/>
    </isoform>
</comment>
<comment type="tissue specificity">
    <text>Expressed at low levels in the lung, kidney and spleen.</text>
</comment>
<comment type="induction">
    <text evidence="15">By ER stress.</text>
</comment>
<comment type="domain">
    <text evidence="12">The 9aaTAD motif is a transactivation domain present in a large number of yeast and animal transcription factors.</text>
</comment>
<comment type="PTM">
    <text evidence="22 23">Methylated. Methylation at Arg-3 by CARM1 and at Lys-43 by EHMT2 inhibit transactivation activity. Methylation is probably inhibited by phosphorylation at Thr-235.</text>
</comment>
<comment type="PTM">
    <text evidence="2 11">Sumoylated by polymeric chains of SUMO2 or SUMO3 (PubMed:12810706). Sumoylation at Lys-174 is required for inhibition of T-cells proliferation. In adipocytes, sumoylation at Lys-174 by PIAS1 leads to ubiquitination and subsequent proteasomal degradation. Desumoylated by SENP2, which abolishes ubiquitination and stabilizes protein levels (By similarity).</text>
</comment>
<comment type="PTM">
    <text evidence="2">Ubiquitinated, leading to proteasomal degradation.</text>
</comment>
<comment type="PTM">
    <text evidence="2 7">Phosphorylated at Thr-235 by MAPK and CDK2, serves to prime phosphorylation at Thr-226 and Ser-231 by GSK3B and acquire DNA-binding as well as transactivation activities, required to induce adipogenesis. MAPK and CDK2 act sequentially to maintain Thr-235 in the primed phosphorylated state during mitotical cloning expansion and thereby progression of terminal differentiation. Phosphorylation at Thr-266 enhances transactivation activity. Phosphorylation at Ser-325 in response to calcium increases transactivation activity. Phosphorylated at Thr-235 by RPS6KA1 (PubMed:11684016).</text>
</comment>
<comment type="PTM">
    <text evidence="2">O-glycosylated, glycosylation at Ser-227 and Ser-228 prevents phosphorylation on Thr-235, Ser-231 and Thr-226 and DNA binding activity which delays the adipocyte differentiation program.</text>
</comment>
<comment type="PTM">
    <text evidence="2">Acetylated. Acetylation at Lys-43 is an important and dynamic regulatory event that contributes to its ability to transactivate target genes, including those associated with adipogenesis and adipocyte function. Deacetylation by HDAC1 represses its transactivation activity. Acetylated by KAT2A and KAT2B within a cluster of lysine residues between amino acids 129-133, this acetylation is strongly induced by glucocorticoid treatment and enhances transactivation activity.</text>
</comment>
<comment type="similarity">
    <text evidence="21">Belongs to the bZIP family. C/EBP subfamily.</text>
</comment>
<feature type="chain" id="PRO_0000076617" description="CCAAT/enhancer-binding protein beta">
    <location>
        <begin position="1"/>
        <end position="345"/>
    </location>
</feature>
<feature type="domain" description="bZIP" evidence="3">
    <location>
        <begin position="271"/>
        <end position="334"/>
    </location>
</feature>
<feature type="region of interest" description="Required for Lys-174 sumoylation">
    <location>
        <begin position="1"/>
        <end position="24"/>
    </location>
</feature>
<feature type="region of interest" description="Required for MYC transcriptional repression" evidence="2">
    <location>
        <begin position="24"/>
        <end position="135"/>
    </location>
</feature>
<feature type="region of interest" description="Disordered" evidence="4">
    <location>
        <begin position="46"/>
        <end position="67"/>
    </location>
</feature>
<feature type="region of interest" description="Disordered" evidence="4">
    <location>
        <begin position="79"/>
        <end position="116"/>
    </location>
</feature>
<feature type="region of interest" description="Disordered" evidence="4">
    <location>
        <begin position="157"/>
        <end position="178"/>
    </location>
</feature>
<feature type="region of interest" description="Disordered" evidence="4">
    <location>
        <begin position="218"/>
        <end position="271"/>
    </location>
</feature>
<feature type="region of interest" description="Basic motif" evidence="3">
    <location>
        <begin position="275"/>
        <end position="295"/>
    </location>
</feature>
<feature type="region of interest" description="Leucine-zipper" evidence="3">
    <location>
        <begin position="297"/>
        <end position="304"/>
    </location>
</feature>
<feature type="short sequence motif" description="9aaTAD">
    <location>
        <begin position="116"/>
        <end position="124"/>
    </location>
</feature>
<feature type="compositionally biased region" description="Pro residues" evidence="4">
    <location>
        <begin position="47"/>
        <end position="59"/>
    </location>
</feature>
<feature type="compositionally biased region" description="Low complexity" evidence="4">
    <location>
        <begin position="84"/>
        <end position="100"/>
    </location>
</feature>
<feature type="compositionally biased region" description="Pro residues" evidence="4">
    <location>
        <begin position="160"/>
        <end position="171"/>
    </location>
</feature>
<feature type="compositionally biased region" description="Low complexity" evidence="4">
    <location>
        <begin position="218"/>
        <end position="232"/>
    </location>
</feature>
<feature type="modified residue" description="Asymmetric dimethylarginine; by CARM1" evidence="23">
    <location>
        <position position="3"/>
    </location>
</feature>
<feature type="modified residue" description="N6-acetyllysine; alternate" evidence="2">
    <location>
        <position position="43"/>
    </location>
</feature>
<feature type="modified residue" description="N6-methylated lysine; alternate" evidence="2">
    <location>
        <position position="43"/>
    </location>
</feature>
<feature type="modified residue" description="N6-acetyllysine; by KAT2A and KAT2B" evidence="2">
    <location>
        <position position="129"/>
    </location>
</feature>
<feature type="modified residue" description="N6-acetyllysine; by KAT2A and KAT2B" evidence="2">
    <location>
        <position position="132"/>
    </location>
</feature>
<feature type="modified residue" description="N6-acetyllysine; by KAT2A and KAT2B; alternate" evidence="2">
    <location>
        <position position="133"/>
    </location>
</feature>
<feature type="modified residue" description="Phosphothreonine; by GSK3-beta" evidence="2">
    <location>
        <position position="226"/>
    </location>
</feature>
<feature type="modified residue" description="Phosphoserine; by GSK3-beta" evidence="2">
    <location>
        <position position="231"/>
    </location>
</feature>
<feature type="modified residue" description="Phosphothreonine; by RPS6KA1, CDK2 and MAPK" evidence="7 13">
    <location>
        <position position="235"/>
    </location>
</feature>
<feature type="modified residue" description="Phosphothreonine; by RPS6KA1 and PKC/PRKCA" evidence="2">
    <location>
        <position position="266"/>
    </location>
</feature>
<feature type="modified residue" description="Phosphoserine; by PKC/PRKCA" evidence="24">
    <location>
        <position position="288"/>
    </location>
</feature>
<feature type="modified residue" description="Phosphoserine; by CaMK2" evidence="2">
    <location>
        <position position="325"/>
    </location>
</feature>
<feature type="glycosylation site" description="O-linked (GlcNAc) serine" evidence="2">
    <location>
        <position position="227"/>
    </location>
</feature>
<feature type="glycosylation site" description="O-linked (GlcNAc) serine" evidence="2">
    <location>
        <position position="228"/>
    </location>
</feature>
<feature type="cross-link" description="Glycyl lysine isopeptide (Lys-Gly) (interchain with G-Cter in SUMO2); alternate" evidence="26 28 29">
    <location>
        <position position="133"/>
    </location>
</feature>
<feature type="cross-link" description="Glycyl lysine isopeptide (Lys-Gly) (interchain with G-Cter in SUMO); alternate" evidence="11">
    <location>
        <position position="174"/>
    </location>
</feature>
<feature type="cross-link" description="Glycyl lysine isopeptide (Lys-Gly) (interchain with G-Cter in SUMO2); alternate" evidence="26 27 28 29">
    <location>
        <position position="174"/>
    </location>
</feature>
<feature type="cross-link" description="Glycyl lysine isopeptide (Lys-Gly) (interchain with G-Cter in SUMO2)" evidence="29">
    <location>
        <position position="185"/>
    </location>
</feature>
<feature type="cross-link" description="Glycyl lysine isopeptide (Lys-Gly) (interchain with G-Cter in SUMO2)" evidence="26 28 29">
    <location>
        <position position="187"/>
    </location>
</feature>
<feature type="cross-link" description="Glycyl lysine isopeptide (Lys-Gly) (interchain with G-Cter in SUMO2)" evidence="26 28 29">
    <location>
        <position position="260"/>
    </location>
</feature>
<feature type="cross-link" description="Glycyl lysine isopeptide (Lys-Gly) (interchain with G-Cter in SUMO2)" evidence="29">
    <location>
        <position position="262"/>
    </location>
</feature>
<feature type="cross-link" description="Glycyl lysine isopeptide (Lys-Gly) (interchain with G-Cter in SUMO2)" evidence="29">
    <location>
        <position position="332"/>
    </location>
</feature>
<feature type="splice variant" id="VSP_053313" description="In isoform 3." evidence="21">
    <location>
        <begin position="1"/>
        <end position="198"/>
    </location>
</feature>
<feature type="splice variant" id="VSP_053314" description="In isoform 2." evidence="21">
    <location>
        <begin position="1"/>
        <end position="23"/>
    </location>
</feature>
<feature type="sequence variant" id="VAR_016300" description="In dbSNP:rs4253440." evidence="18">
    <original>G</original>
    <variation>S</variation>
    <location>
        <position position="195"/>
    </location>
</feature>
<feature type="mutagenesis site" description="Loss of transactivation activity in response to IFNG." evidence="10">
    <original>T</original>
    <variation>S</variation>
    <location>
        <position position="235"/>
    </location>
</feature>
<feature type="mutagenesis site" description="Loss of nuclear translocation." evidence="17">
    <original>S</original>
    <variation>A</variation>
    <location>
        <position position="288"/>
    </location>
</feature>
<feature type="sequence conflict" description="In Ref. 8; no nucleotide entry." evidence="21" ref="8">
    <original>A</original>
    <variation>P</variation>
    <location>
        <position position="241"/>
    </location>
</feature>
<feature type="sequence conflict" description="In Ref. 1; CAA36794." evidence="21" ref="1">
    <original>A</original>
    <variation>G</variation>
    <location>
        <position position="253"/>
    </location>
</feature>
<feature type="strand" evidence="30">
    <location>
        <begin position="269"/>
        <end position="271"/>
    </location>
</feature>
<feature type="helix" evidence="31">
    <location>
        <begin position="272"/>
        <end position="329"/>
    </location>
</feature>
<feature type="turn" evidence="32">
    <location>
        <begin position="330"/>
        <end position="332"/>
    </location>
</feature>
<protein>
    <recommendedName>
        <fullName evidence="25">CCAAT/enhancer-binding protein beta</fullName>
        <shortName evidence="25">C/EBP beta</shortName>
    </recommendedName>
    <alternativeName>
        <fullName>Liver activator protein</fullName>
        <shortName>LAP</shortName>
    </alternativeName>
    <alternativeName>
        <fullName>Liver-enriched inhibitory protein</fullName>
        <shortName>LIP</shortName>
    </alternativeName>
    <alternativeName>
        <fullName evidence="19">Nuclear factor NF-IL6</fullName>
    </alternativeName>
    <alternativeName>
        <fullName>Transcription factor 5</fullName>
        <shortName>TCF-5</shortName>
    </alternativeName>
</protein>
<gene>
    <name evidence="25" type="primary">CEBPB</name>
    <name type="synonym">TCF5</name>
    <name type="ORF">PP9092</name>
</gene>
<dbReference type="EMBL" id="X52560">
    <property type="protein sequence ID" value="CAA36794.1"/>
    <property type="molecule type" value="Genomic_DNA"/>
</dbReference>
<dbReference type="EMBL" id="AF289608">
    <property type="protein sequence ID" value="AAL55792.1"/>
    <property type="molecule type" value="mRNA"/>
</dbReference>
<dbReference type="EMBL" id="AY193834">
    <property type="protein sequence ID" value="AAN86350.1"/>
    <property type="molecule type" value="Genomic_DNA"/>
</dbReference>
<dbReference type="EMBL" id="AK291536">
    <property type="protein sequence ID" value="BAF84225.1"/>
    <property type="molecule type" value="mRNA"/>
</dbReference>
<dbReference type="EMBL" id="AL161937">
    <property type="status" value="NOT_ANNOTATED_CDS"/>
    <property type="molecule type" value="Genomic_DNA"/>
</dbReference>
<dbReference type="EMBL" id="CH471077">
    <property type="protein sequence ID" value="EAW75629.1"/>
    <property type="molecule type" value="Genomic_DNA"/>
</dbReference>
<dbReference type="EMBL" id="BC007538">
    <property type="protein sequence ID" value="AAH07538.1"/>
    <property type="molecule type" value="mRNA"/>
</dbReference>
<dbReference type="EMBL" id="BC021931">
    <property type="protein sequence ID" value="AAH21931.1"/>
    <property type="molecule type" value="mRNA"/>
</dbReference>
<dbReference type="CCDS" id="CCDS13429.1">
    <molecule id="P17676-1"/>
</dbReference>
<dbReference type="PIR" id="S12788">
    <property type="entry name" value="S12788"/>
</dbReference>
<dbReference type="PIR" id="S66246">
    <property type="entry name" value="S66246"/>
</dbReference>
<dbReference type="RefSeq" id="NP_001272807.1">
    <molecule id="P17676-2"/>
    <property type="nucleotide sequence ID" value="NM_001285878.1"/>
</dbReference>
<dbReference type="RefSeq" id="NP_001272808.1">
    <molecule id="P17676-3"/>
    <property type="nucleotide sequence ID" value="NM_001285879.1"/>
</dbReference>
<dbReference type="RefSeq" id="NP_005185.2">
    <molecule id="P17676-1"/>
    <property type="nucleotide sequence ID" value="NM_005194.3"/>
</dbReference>
<dbReference type="PDB" id="1GTW">
    <property type="method" value="X-ray"/>
    <property type="resolution" value="1.85 A"/>
    <property type="chains" value="A/B=259-336"/>
</dbReference>
<dbReference type="PDB" id="1GU4">
    <property type="method" value="X-ray"/>
    <property type="resolution" value="1.80 A"/>
    <property type="chains" value="A/B=259-336"/>
</dbReference>
<dbReference type="PDB" id="1GU5">
    <property type="method" value="X-ray"/>
    <property type="resolution" value="2.10 A"/>
    <property type="chains" value="A/B=259-336"/>
</dbReference>
<dbReference type="PDB" id="1H88">
    <property type="method" value="X-ray"/>
    <property type="resolution" value="2.80 A"/>
    <property type="chains" value="A/B=259-336"/>
</dbReference>
<dbReference type="PDB" id="1H89">
    <property type="method" value="X-ray"/>
    <property type="resolution" value="2.45 A"/>
    <property type="chains" value="A/B=273-336"/>
</dbReference>
<dbReference type="PDB" id="1H8A">
    <property type="method" value="X-ray"/>
    <property type="resolution" value="2.23 A"/>
    <property type="chains" value="A/B=259-336"/>
</dbReference>
<dbReference type="PDB" id="1HJB">
    <property type="method" value="X-ray"/>
    <property type="resolution" value="3.00 A"/>
    <property type="chains" value="A/B/D/E=259-345"/>
</dbReference>
<dbReference type="PDB" id="1IO4">
    <property type="method" value="X-ray"/>
    <property type="resolution" value="3.00 A"/>
    <property type="chains" value="A/B=259-336"/>
</dbReference>
<dbReference type="PDB" id="2E42">
    <property type="method" value="X-ray"/>
    <property type="resolution" value="1.80 A"/>
    <property type="chains" value="A/B=259-336"/>
</dbReference>
<dbReference type="PDB" id="2E43">
    <property type="method" value="X-ray"/>
    <property type="resolution" value="2.10 A"/>
    <property type="chains" value="A/B=259-336"/>
</dbReference>
<dbReference type="PDB" id="6MG1">
    <property type="method" value="X-ray"/>
    <property type="resolution" value="1.75 A"/>
    <property type="chains" value="A/B=269-344"/>
</dbReference>
<dbReference type="PDB" id="6MG2">
    <property type="method" value="X-ray"/>
    <property type="resolution" value="1.93 A"/>
    <property type="chains" value="A/B=269-344"/>
</dbReference>
<dbReference type="PDB" id="6MG3">
    <property type="method" value="X-ray"/>
    <property type="resolution" value="2.05 A"/>
    <property type="chains" value="A/B=269-344"/>
</dbReference>
<dbReference type="PDB" id="7L4V">
    <property type="method" value="X-ray"/>
    <property type="resolution" value="1.75 A"/>
    <property type="chains" value="A/B=269-344"/>
</dbReference>
<dbReference type="PDB" id="7UPZ">
    <property type="method" value="X-ray"/>
    <property type="resolution" value="2.49 A"/>
    <property type="chains" value="A/B=257-336"/>
</dbReference>
<dbReference type="PDB" id="8K8D">
    <property type="method" value="X-ray"/>
    <property type="resolution" value="2.20 A"/>
    <property type="chains" value="A/B=259-336"/>
</dbReference>
<dbReference type="PDBsum" id="1GTW"/>
<dbReference type="PDBsum" id="1GU4"/>
<dbReference type="PDBsum" id="1GU5"/>
<dbReference type="PDBsum" id="1H88"/>
<dbReference type="PDBsum" id="1H89"/>
<dbReference type="PDBsum" id="1H8A"/>
<dbReference type="PDBsum" id="1HJB"/>
<dbReference type="PDBsum" id="1IO4"/>
<dbReference type="PDBsum" id="2E42"/>
<dbReference type="PDBsum" id="2E43"/>
<dbReference type="PDBsum" id="6MG1"/>
<dbReference type="PDBsum" id="6MG2"/>
<dbReference type="PDBsum" id="6MG3"/>
<dbReference type="PDBsum" id="7L4V"/>
<dbReference type="PDBsum" id="7UPZ"/>
<dbReference type="PDBsum" id="8K8D"/>
<dbReference type="SMR" id="P17676"/>
<dbReference type="BioGRID" id="107480">
    <property type="interactions" value="1428"/>
</dbReference>
<dbReference type="ComplexPortal" id="CPX-3361">
    <property type="entry name" value="bZIP transcription factor complex, CEBPB-CEBPB"/>
</dbReference>
<dbReference type="ComplexPortal" id="CPX-504">
    <property type="entry name" value="c-Myb-C/EBPbeta complex"/>
</dbReference>
<dbReference type="ComplexPortal" id="CPX-509">
    <property type="entry name" value="bZIP transcription factor complex, CEBPA-CEBPB"/>
</dbReference>
<dbReference type="ComplexPortal" id="CPX-6470">
    <property type="entry name" value="bZIP transcription factor complex, ATF3-CEBPB"/>
</dbReference>
<dbReference type="ComplexPortal" id="CPX-6471">
    <property type="entry name" value="bZIP transcription factor complex, ATF3-CEBPG"/>
</dbReference>
<dbReference type="ComplexPortal" id="CPX-6526">
    <property type="entry name" value="bZIP transcription factor complex, ATF4-CEBPB"/>
</dbReference>
<dbReference type="ComplexPortal" id="CPX-70">
    <property type="entry name" value="bZIP transcription factor complex, CEBPB-DDIT3"/>
</dbReference>
<dbReference type="ComplexPortal" id="CPX-7007">
    <property type="entry name" value="bZIP transcription factor complex, BATF-CEBPB"/>
</dbReference>
<dbReference type="ComplexPortal" id="CPX-7096">
    <property type="entry name" value="bZIP transcription factor complex, BATF3-CEBPB"/>
</dbReference>
<dbReference type="CORUM" id="P17676"/>
<dbReference type="DIP" id="DIP-35345N"/>
<dbReference type="ELM" id="P17676"/>
<dbReference type="FunCoup" id="P17676">
    <property type="interactions" value="5648"/>
</dbReference>
<dbReference type="IntAct" id="P17676">
    <property type="interactions" value="34"/>
</dbReference>
<dbReference type="MINT" id="P17676"/>
<dbReference type="STRING" id="9606.ENSP00000305422"/>
<dbReference type="DrugBank" id="DB04216">
    <property type="generic name" value="Quercetin"/>
</dbReference>
<dbReference type="GlyCosmos" id="P17676">
    <property type="glycosylation" value="2 sites, No reported glycans"/>
</dbReference>
<dbReference type="GlyGen" id="P17676">
    <property type="glycosylation" value="4 sites, 1 O-linked glycan (1 site)"/>
</dbReference>
<dbReference type="iPTMnet" id="P17676"/>
<dbReference type="PhosphoSitePlus" id="P17676"/>
<dbReference type="SwissPalm" id="P17676"/>
<dbReference type="BioMuta" id="CEBPB"/>
<dbReference type="DMDM" id="34223718"/>
<dbReference type="jPOST" id="P17676"/>
<dbReference type="MassIVE" id="P17676"/>
<dbReference type="PaxDb" id="9606-ENSP00000305422"/>
<dbReference type="PeptideAtlas" id="P17676"/>
<dbReference type="ProteomicsDB" id="53503">
    <molecule id="P17676-1"/>
</dbReference>
<dbReference type="Pumba" id="P17676"/>
<dbReference type="Antibodypedia" id="3782">
    <property type="antibodies" value="658 antibodies from 41 providers"/>
</dbReference>
<dbReference type="DNASU" id="1051"/>
<dbReference type="Ensembl" id="ENST00000303004.5">
    <molecule id="P17676-1"/>
    <property type="protein sequence ID" value="ENSP00000305422.3"/>
    <property type="gene ID" value="ENSG00000172216.7"/>
</dbReference>
<dbReference type="Ensembl" id="ENST00000718336.1">
    <molecule id="P17676-1"/>
    <property type="protein sequence ID" value="ENSP00000520773.1"/>
    <property type="gene ID" value="ENSG00000172216.7"/>
</dbReference>
<dbReference type="GeneID" id="1051"/>
<dbReference type="KEGG" id="hsa:1051"/>
<dbReference type="MANE-Select" id="ENST00000303004.5">
    <property type="protein sequence ID" value="ENSP00000305422.3"/>
    <property type="RefSeq nucleotide sequence ID" value="NM_005194.4"/>
    <property type="RefSeq protein sequence ID" value="NP_005185.2"/>
</dbReference>
<dbReference type="UCSC" id="uc002xvi.4">
    <molecule id="P17676-1"/>
    <property type="organism name" value="human"/>
</dbReference>
<dbReference type="AGR" id="HGNC:1834"/>
<dbReference type="CTD" id="1051"/>
<dbReference type="DisGeNET" id="1051"/>
<dbReference type="GeneCards" id="CEBPB"/>
<dbReference type="HGNC" id="HGNC:1834">
    <property type="gene designation" value="CEBPB"/>
</dbReference>
<dbReference type="HPA" id="ENSG00000172216">
    <property type="expression patterns" value="Low tissue specificity"/>
</dbReference>
<dbReference type="MIM" id="189965">
    <property type="type" value="gene"/>
</dbReference>
<dbReference type="neXtProt" id="NX_P17676"/>
<dbReference type="OpenTargets" id="ENSG00000172216"/>
<dbReference type="PharmGKB" id="PA26377"/>
<dbReference type="VEuPathDB" id="HostDB:ENSG00000172216"/>
<dbReference type="eggNOG" id="KOG3119">
    <property type="taxonomic scope" value="Eukaryota"/>
</dbReference>
<dbReference type="GeneTree" id="ENSGT00940000162137"/>
<dbReference type="HOGENOM" id="CLU_043327_1_0_1"/>
<dbReference type="InParanoid" id="P17676"/>
<dbReference type="OMA" id="RLVAWDQ"/>
<dbReference type="OrthoDB" id="10032067at2759"/>
<dbReference type="PAN-GO" id="P17676">
    <property type="GO annotations" value="4 GO annotations based on evolutionary models"/>
</dbReference>
<dbReference type="PhylomeDB" id="P17676"/>
<dbReference type="TreeFam" id="TF105008"/>
<dbReference type="PathwayCommons" id="P17676"/>
<dbReference type="Reactome" id="R-HSA-2559582">
    <property type="pathway name" value="Senescence-Associated Secretory Phenotype (SASP)"/>
</dbReference>
<dbReference type="Reactome" id="R-HSA-380994">
    <property type="pathway name" value="ATF4 activates genes in response to endoplasmic reticulum stress"/>
</dbReference>
<dbReference type="Reactome" id="R-HSA-381340">
    <property type="pathway name" value="Transcriptional regulation of white adipocyte differentiation"/>
</dbReference>
<dbReference type="Reactome" id="R-HSA-8853884">
    <property type="pathway name" value="Transcriptional Regulation by VENTX"/>
</dbReference>
<dbReference type="Reactome" id="R-HSA-9616222">
    <property type="pathway name" value="Transcriptional regulation of granulopoiesis"/>
</dbReference>
<dbReference type="Reactome" id="R-HSA-9633012">
    <property type="pathway name" value="Response of EIF2AK4 (GCN2) to amino acid deficiency"/>
</dbReference>
<dbReference type="Reactome" id="R-HSA-9648895">
    <property type="pathway name" value="Response of EIF2AK1 (HRI) to heme deficiency"/>
</dbReference>
<dbReference type="Reactome" id="R-HSA-9725371">
    <property type="pathway name" value="Nuclear events stimulated by ALK signaling in cancer"/>
</dbReference>
<dbReference type="SignaLink" id="P17676"/>
<dbReference type="SIGNOR" id="P17676"/>
<dbReference type="BioGRID-ORCS" id="1051">
    <property type="hits" value="69 hits in 1187 CRISPR screens"/>
</dbReference>
<dbReference type="CD-CODE" id="804901D1">
    <property type="entry name" value="Nuclear speckle"/>
</dbReference>
<dbReference type="ChiTaRS" id="CEBPB">
    <property type="organism name" value="human"/>
</dbReference>
<dbReference type="EvolutionaryTrace" id="P17676"/>
<dbReference type="GeneWiki" id="CEBPB"/>
<dbReference type="GenomeRNAi" id="1051"/>
<dbReference type="Pharos" id="P17676">
    <property type="development level" value="Tbio"/>
</dbReference>
<dbReference type="PRO" id="PR:P17676"/>
<dbReference type="Proteomes" id="UP000005640">
    <property type="component" value="Chromosome 20"/>
</dbReference>
<dbReference type="RNAct" id="P17676">
    <property type="molecule type" value="protein"/>
</dbReference>
<dbReference type="Bgee" id="ENSG00000172216">
    <property type="expression patterns" value="Expressed in lower lobe of lung and 208 other cell types or tissues"/>
</dbReference>
<dbReference type="GO" id="GO:1990647">
    <property type="term" value="C:C/EBP complex"/>
    <property type="evidence" value="ECO:0000353"/>
    <property type="project" value="ComplexPortal"/>
</dbReference>
<dbReference type="GO" id="GO:0036488">
    <property type="term" value="C:CHOP-C/EBP complex"/>
    <property type="evidence" value="ECO:0000353"/>
    <property type="project" value="ComplexPortal"/>
</dbReference>
<dbReference type="GO" id="GO:0000785">
    <property type="term" value="C:chromatin"/>
    <property type="evidence" value="ECO:0000247"/>
    <property type="project" value="NTNU_SB"/>
</dbReference>
<dbReference type="GO" id="GO:0000779">
    <property type="term" value="C:condensed chromosome, centromeric region"/>
    <property type="evidence" value="ECO:0007669"/>
    <property type="project" value="Ensembl"/>
</dbReference>
<dbReference type="GO" id="GO:0005737">
    <property type="term" value="C:cytoplasm"/>
    <property type="evidence" value="ECO:0007669"/>
    <property type="project" value="UniProtKB-SubCell"/>
</dbReference>
<dbReference type="GO" id="GO:0016363">
    <property type="term" value="C:nuclear matrix"/>
    <property type="evidence" value="ECO:0007669"/>
    <property type="project" value="Ensembl"/>
</dbReference>
<dbReference type="GO" id="GO:0005654">
    <property type="term" value="C:nucleoplasm"/>
    <property type="evidence" value="ECO:0000314"/>
    <property type="project" value="HPA"/>
</dbReference>
<dbReference type="GO" id="GO:0005634">
    <property type="term" value="C:nucleus"/>
    <property type="evidence" value="ECO:0000314"/>
    <property type="project" value="UniProtKB"/>
</dbReference>
<dbReference type="GO" id="GO:0090575">
    <property type="term" value="C:RNA polymerase II transcription regulator complex"/>
    <property type="evidence" value="ECO:0000353"/>
    <property type="project" value="ComplexPortal"/>
</dbReference>
<dbReference type="GO" id="GO:0031490">
    <property type="term" value="F:chromatin DNA binding"/>
    <property type="evidence" value="ECO:0007669"/>
    <property type="project" value="Ensembl"/>
</dbReference>
<dbReference type="GO" id="GO:0003677">
    <property type="term" value="F:DNA binding"/>
    <property type="evidence" value="ECO:0000304"/>
    <property type="project" value="ProtInc"/>
</dbReference>
<dbReference type="GO" id="GO:0001228">
    <property type="term" value="F:DNA-binding transcription activator activity, RNA polymerase II-specific"/>
    <property type="evidence" value="ECO:0007669"/>
    <property type="project" value="Ensembl"/>
</dbReference>
<dbReference type="GO" id="GO:0003700">
    <property type="term" value="F:DNA-binding transcription factor activity"/>
    <property type="evidence" value="ECO:0000303"/>
    <property type="project" value="ProtInc"/>
</dbReference>
<dbReference type="GO" id="GO:0000981">
    <property type="term" value="F:DNA-binding transcription factor activity, RNA polymerase II-specific"/>
    <property type="evidence" value="ECO:0000250"/>
    <property type="project" value="UniProtKB"/>
</dbReference>
<dbReference type="GO" id="GO:0001227">
    <property type="term" value="F:DNA-binding transcription repressor activity, RNA polymerase II-specific"/>
    <property type="evidence" value="ECO:0000250"/>
    <property type="project" value="UniProtKB"/>
</dbReference>
<dbReference type="GO" id="GO:0035035">
    <property type="term" value="F:histone acetyltransferase binding"/>
    <property type="evidence" value="ECO:0007669"/>
    <property type="project" value="Ensembl"/>
</dbReference>
<dbReference type="GO" id="GO:0042826">
    <property type="term" value="F:histone deacetylase binding"/>
    <property type="evidence" value="ECO:0007669"/>
    <property type="project" value="Ensembl"/>
</dbReference>
<dbReference type="GO" id="GO:0019900">
    <property type="term" value="F:kinase binding"/>
    <property type="evidence" value="ECO:0007669"/>
    <property type="project" value="Ensembl"/>
</dbReference>
<dbReference type="GO" id="GO:0035259">
    <property type="term" value="F:nuclear glucocorticoid receptor binding"/>
    <property type="evidence" value="ECO:0007669"/>
    <property type="project" value="Ensembl"/>
</dbReference>
<dbReference type="GO" id="GO:0046982">
    <property type="term" value="F:protein heterodimerization activity"/>
    <property type="evidence" value="ECO:0007669"/>
    <property type="project" value="Ensembl"/>
</dbReference>
<dbReference type="GO" id="GO:0042803">
    <property type="term" value="F:protein homodimerization activity"/>
    <property type="evidence" value="ECO:0000250"/>
    <property type="project" value="UniProtKB"/>
</dbReference>
<dbReference type="GO" id="GO:0000978">
    <property type="term" value="F:RNA polymerase II cis-regulatory region sequence-specific DNA binding"/>
    <property type="evidence" value="ECO:0000318"/>
    <property type="project" value="GO_Central"/>
</dbReference>
<dbReference type="GO" id="GO:0000979">
    <property type="term" value="F:RNA polymerase II core promoter sequence-specific DNA binding"/>
    <property type="evidence" value="ECO:0007669"/>
    <property type="project" value="Ensembl"/>
</dbReference>
<dbReference type="GO" id="GO:0000977">
    <property type="term" value="F:RNA polymerase II transcription regulatory region sequence-specific DNA binding"/>
    <property type="evidence" value="ECO:0000314"/>
    <property type="project" value="MGI"/>
</dbReference>
<dbReference type="GO" id="GO:1990837">
    <property type="term" value="F:sequence-specific double-stranded DNA binding"/>
    <property type="evidence" value="ECO:0000314"/>
    <property type="project" value="ARUK-UCL"/>
</dbReference>
<dbReference type="GO" id="GO:0000976">
    <property type="term" value="F:transcription cis-regulatory region binding"/>
    <property type="evidence" value="ECO:0000314"/>
    <property type="project" value="ARUK-UCL"/>
</dbReference>
<dbReference type="GO" id="GO:0044389">
    <property type="term" value="F:ubiquitin-like protein ligase binding"/>
    <property type="evidence" value="ECO:0007669"/>
    <property type="project" value="Ensembl"/>
</dbReference>
<dbReference type="GO" id="GO:0006953">
    <property type="term" value="P:acute-phase response"/>
    <property type="evidence" value="ECO:0000304"/>
    <property type="project" value="ProtInc"/>
</dbReference>
<dbReference type="GO" id="GO:0050873">
    <property type="term" value="P:brown fat cell differentiation"/>
    <property type="evidence" value="ECO:0007669"/>
    <property type="project" value="Ensembl"/>
</dbReference>
<dbReference type="GO" id="GO:0071230">
    <property type="term" value="P:cellular response to amino acid stimulus"/>
    <property type="evidence" value="ECO:0007669"/>
    <property type="project" value="Ensembl"/>
</dbReference>
<dbReference type="GO" id="GO:0071347">
    <property type="term" value="P:cellular response to interleukin-1"/>
    <property type="evidence" value="ECO:0007669"/>
    <property type="project" value="Ensembl"/>
</dbReference>
<dbReference type="GO" id="GO:0071222">
    <property type="term" value="P:cellular response to lipopolysaccharide"/>
    <property type="evidence" value="ECO:0007669"/>
    <property type="project" value="Ensembl"/>
</dbReference>
<dbReference type="GO" id="GO:0042742">
    <property type="term" value="P:defense response to bacterium"/>
    <property type="evidence" value="ECO:0000250"/>
    <property type="project" value="UniProtKB"/>
</dbReference>
<dbReference type="GO" id="GO:0001892">
    <property type="term" value="P:embryonic placenta development"/>
    <property type="evidence" value="ECO:0007669"/>
    <property type="project" value="Ensembl"/>
</dbReference>
<dbReference type="GO" id="GO:0002432">
    <property type="term" value="P:granuloma formation"/>
    <property type="evidence" value="ECO:0000250"/>
    <property type="project" value="UniProtKB"/>
</dbReference>
<dbReference type="GO" id="GO:0072574">
    <property type="term" value="P:hepatocyte proliferation"/>
    <property type="evidence" value="ECO:0000250"/>
    <property type="project" value="UniProtKB"/>
</dbReference>
<dbReference type="GO" id="GO:0006955">
    <property type="term" value="P:immune response"/>
    <property type="evidence" value="ECO:0000304"/>
    <property type="project" value="ProtInc"/>
</dbReference>
<dbReference type="GO" id="GO:0006954">
    <property type="term" value="P:inflammatory response"/>
    <property type="evidence" value="ECO:0000304"/>
    <property type="project" value="ProtInc"/>
</dbReference>
<dbReference type="GO" id="GO:0140467">
    <property type="term" value="P:integrated stress response signaling"/>
    <property type="evidence" value="ECO:0000303"/>
    <property type="project" value="ComplexPortal"/>
</dbReference>
<dbReference type="GO" id="GO:0070059">
    <property type="term" value="P:intrinsic apoptotic signaling pathway in response to endoplasmic reticulum stress"/>
    <property type="evidence" value="ECO:0000304"/>
    <property type="project" value="ParkinsonsUK-UCL"/>
</dbReference>
<dbReference type="GO" id="GO:0097421">
    <property type="term" value="P:liver regeneration"/>
    <property type="evidence" value="ECO:0000250"/>
    <property type="project" value="UniProtKB"/>
</dbReference>
<dbReference type="GO" id="GO:0060644">
    <property type="term" value="P:mammary gland epithelial cell differentiation"/>
    <property type="evidence" value="ECO:0007669"/>
    <property type="project" value="Ensembl"/>
</dbReference>
<dbReference type="GO" id="GO:0033598">
    <property type="term" value="P:mammary gland epithelial cell proliferation"/>
    <property type="evidence" value="ECO:0007669"/>
    <property type="project" value="Ensembl"/>
</dbReference>
<dbReference type="GO" id="GO:0007613">
    <property type="term" value="P:memory"/>
    <property type="evidence" value="ECO:0007669"/>
    <property type="project" value="Ensembl"/>
</dbReference>
<dbReference type="GO" id="GO:0061515">
    <property type="term" value="P:myeloid cell development"/>
    <property type="evidence" value="ECO:0000303"/>
    <property type="project" value="ComplexPortal"/>
</dbReference>
<dbReference type="GO" id="GO:0043524">
    <property type="term" value="P:negative regulation of neuron apoptotic process"/>
    <property type="evidence" value="ECO:0007669"/>
    <property type="project" value="Ensembl"/>
</dbReference>
<dbReference type="GO" id="GO:0042130">
    <property type="term" value="P:negative regulation of T cell proliferation"/>
    <property type="evidence" value="ECO:0000250"/>
    <property type="project" value="UniProtKB"/>
</dbReference>
<dbReference type="GO" id="GO:0000122">
    <property type="term" value="P:negative regulation of transcription by RNA polymerase II"/>
    <property type="evidence" value="ECO:0000250"/>
    <property type="project" value="UniProtKB"/>
</dbReference>
<dbReference type="GO" id="GO:0030182">
    <property type="term" value="P:neuron differentiation"/>
    <property type="evidence" value="ECO:0007669"/>
    <property type="project" value="Ensembl"/>
</dbReference>
<dbReference type="GO" id="GO:0001541">
    <property type="term" value="P:ovarian follicle development"/>
    <property type="evidence" value="ECO:0000250"/>
    <property type="project" value="UniProtKB"/>
</dbReference>
<dbReference type="GO" id="GO:0070169">
    <property type="term" value="P:positive regulation of biomineral tissue development"/>
    <property type="evidence" value="ECO:0000314"/>
    <property type="project" value="MGI"/>
</dbReference>
<dbReference type="GO" id="GO:0120162">
    <property type="term" value="P:positive regulation of cold-induced thermogenesis"/>
    <property type="evidence" value="ECO:0000250"/>
    <property type="project" value="YuBioLab"/>
</dbReference>
<dbReference type="GO" id="GO:0045893">
    <property type="term" value="P:positive regulation of DNA-templated transcription"/>
    <property type="evidence" value="ECO:0000314"/>
    <property type="project" value="MGI"/>
</dbReference>
<dbReference type="GO" id="GO:0045600">
    <property type="term" value="P:positive regulation of fat cell differentiation"/>
    <property type="evidence" value="ECO:0000250"/>
    <property type="project" value="UniProtKB"/>
</dbReference>
<dbReference type="GO" id="GO:0050729">
    <property type="term" value="P:positive regulation of inflammatory response"/>
    <property type="evidence" value="ECO:0007669"/>
    <property type="project" value="Ensembl"/>
</dbReference>
<dbReference type="GO" id="GO:0032753">
    <property type="term" value="P:positive regulation of interleukin-4 production"/>
    <property type="evidence" value="ECO:0000250"/>
    <property type="project" value="UniProtKB"/>
</dbReference>
<dbReference type="GO" id="GO:0045669">
    <property type="term" value="P:positive regulation of osteoblast differentiation"/>
    <property type="evidence" value="ECO:0007669"/>
    <property type="project" value="Ensembl"/>
</dbReference>
<dbReference type="GO" id="GO:2000120">
    <property type="term" value="P:positive regulation of sodium-dependent phosphate transport"/>
    <property type="evidence" value="ECO:0000314"/>
    <property type="project" value="MGI"/>
</dbReference>
<dbReference type="GO" id="GO:0045944">
    <property type="term" value="P:positive regulation of transcription by RNA polymerase II"/>
    <property type="evidence" value="ECO:0000314"/>
    <property type="project" value="ParkinsonsUK-UCL"/>
</dbReference>
<dbReference type="GO" id="GO:0045595">
    <property type="term" value="P:regulation of cell differentiation"/>
    <property type="evidence" value="ECO:0000318"/>
    <property type="project" value="GO_Central"/>
</dbReference>
<dbReference type="GO" id="GO:2001198">
    <property type="term" value="P:regulation of dendritic cell differentiation"/>
    <property type="evidence" value="ECO:0007669"/>
    <property type="project" value="Ensembl"/>
</dbReference>
<dbReference type="GO" id="GO:0006355">
    <property type="term" value="P:regulation of DNA-templated transcription"/>
    <property type="evidence" value="ECO:0000314"/>
    <property type="project" value="UniProtKB"/>
</dbReference>
<dbReference type="GO" id="GO:0032675">
    <property type="term" value="P:regulation of interleukin-6 production"/>
    <property type="evidence" value="ECO:0007669"/>
    <property type="project" value="Ensembl"/>
</dbReference>
<dbReference type="GO" id="GO:1901329">
    <property type="term" value="P:regulation of odontoblast differentiation"/>
    <property type="evidence" value="ECO:0000250"/>
    <property type="project" value="UniProtKB"/>
</dbReference>
<dbReference type="GO" id="GO:0045670">
    <property type="term" value="P:regulation of osteoclast differentiation"/>
    <property type="evidence" value="ECO:0000250"/>
    <property type="project" value="UniProtKB"/>
</dbReference>
<dbReference type="GO" id="GO:0006357">
    <property type="term" value="P:regulation of transcription by RNA polymerase II"/>
    <property type="evidence" value="ECO:0000314"/>
    <property type="project" value="ComplexPortal"/>
</dbReference>
<dbReference type="GO" id="GO:0034976">
    <property type="term" value="P:response to endoplasmic reticulum stress"/>
    <property type="evidence" value="ECO:0000314"/>
    <property type="project" value="UniProtKB"/>
</dbReference>
<dbReference type="GO" id="GO:0035711">
    <property type="term" value="P:T-helper 1 cell activation"/>
    <property type="evidence" value="ECO:0000250"/>
    <property type="project" value="UniProtKB"/>
</dbReference>
<dbReference type="GO" id="GO:0006366">
    <property type="term" value="P:transcription by RNA polymerase II"/>
    <property type="evidence" value="ECO:0007669"/>
    <property type="project" value="Ensembl"/>
</dbReference>
<dbReference type="CDD" id="cd14712">
    <property type="entry name" value="bZIP_CEBPB"/>
    <property type="match status" value="1"/>
</dbReference>
<dbReference type="FunFam" id="1.20.5.170:FF:000028">
    <property type="entry name" value="CCAAT/enhancer-binding protein beta"/>
    <property type="match status" value="1"/>
</dbReference>
<dbReference type="Gene3D" id="1.20.5.170">
    <property type="match status" value="1"/>
</dbReference>
<dbReference type="InterPro" id="IPR004827">
    <property type="entry name" value="bZIP"/>
</dbReference>
<dbReference type="InterPro" id="IPR046347">
    <property type="entry name" value="bZIP_sf"/>
</dbReference>
<dbReference type="InterPro" id="IPR031106">
    <property type="entry name" value="C/EBP"/>
</dbReference>
<dbReference type="InterPro" id="IPR016468">
    <property type="entry name" value="C/EBP_chordates"/>
</dbReference>
<dbReference type="PANTHER" id="PTHR23334">
    <property type="entry name" value="CCAAT/ENHANCER BINDING PROTEIN"/>
    <property type="match status" value="1"/>
</dbReference>
<dbReference type="PANTHER" id="PTHR23334:SF21">
    <property type="entry name" value="CCAAT_ENHANCER-BINDING PROTEIN BETA"/>
    <property type="match status" value="1"/>
</dbReference>
<dbReference type="Pfam" id="PF07716">
    <property type="entry name" value="bZIP_2"/>
    <property type="match status" value="1"/>
</dbReference>
<dbReference type="PIRSF" id="PIRSF005879">
    <property type="entry name" value="CCAAT/enhancer-binding"/>
    <property type="match status" value="1"/>
</dbReference>
<dbReference type="PRINTS" id="PR01217">
    <property type="entry name" value="PRICHEXTENSN"/>
</dbReference>
<dbReference type="SMART" id="SM00338">
    <property type="entry name" value="BRLZ"/>
    <property type="match status" value="1"/>
</dbReference>
<dbReference type="SUPFAM" id="SSF57959">
    <property type="entry name" value="Leucine zipper domain"/>
    <property type="match status" value="1"/>
</dbReference>
<dbReference type="PROSITE" id="PS50217">
    <property type="entry name" value="BZIP"/>
    <property type="match status" value="1"/>
</dbReference>
<sequence length="345" mass="36106">MQRLVAWDPACLPLPPPPPAFKSMEVANFYYEADCLAAAYGGKAAPAAPPAARPGPRPPAGELGSIGDHERAIDFSPYLEPLGAPQAPAPATATDTFEAAPPAPAPAPASSGQHHDFLSDLFSDDYGGKNCKKPAEYGYVSLGRLGAAKGALHPGCFAPLHPPPPPPPPPAELKAEPGFEPADCKRKEEAGAPGGGAGMAAGFPYALRAYLGYQAVPSGSSGSLSTSSSSSPPGTPSPADAKAPPTACYAGAAPAPSQVKSKAKKTVDKHSDEYKIRRERNNIAVRKSRDKAKMRNLETQHKVLELTAENERLQKKVEQLSRELSTLRNLFKQLPEPLLASSGHC</sequence>
<accession>P17676</accession>
<accession>A8K671</accession>
<accession>Q96IH2</accession>
<accession>Q9H4Z5</accession>
<keyword id="KW-0002">3D-structure</keyword>
<keyword id="KW-0007">Acetylation</keyword>
<keyword id="KW-0010">Activator</keyword>
<keyword id="KW-0024">Alternative initiation</keyword>
<keyword id="KW-0963">Cytoplasm</keyword>
<keyword id="KW-0221">Differentiation</keyword>
<keyword id="KW-0238">DNA-binding</keyword>
<keyword id="KW-0325">Glycoprotein</keyword>
<keyword id="KW-1017">Isopeptide bond</keyword>
<keyword id="KW-0488">Methylation</keyword>
<keyword id="KW-0539">Nucleus</keyword>
<keyword id="KW-0597">Phosphoprotein</keyword>
<keyword id="KW-1267">Proteomics identification</keyword>
<keyword id="KW-1185">Reference proteome</keyword>
<keyword id="KW-0804">Transcription</keyword>
<keyword id="KW-0805">Transcription regulation</keyword>
<keyword id="KW-0832">Ubl conjugation</keyword>
<proteinExistence type="evidence at protein level"/>
<name>CEBPB_HUMAN</name>
<organism>
    <name type="scientific">Homo sapiens</name>
    <name type="common">Human</name>
    <dbReference type="NCBI Taxonomy" id="9606"/>
    <lineage>
        <taxon>Eukaryota</taxon>
        <taxon>Metazoa</taxon>
        <taxon>Chordata</taxon>
        <taxon>Craniata</taxon>
        <taxon>Vertebrata</taxon>
        <taxon>Euteleostomi</taxon>
        <taxon>Mammalia</taxon>
        <taxon>Eutheria</taxon>
        <taxon>Euarchontoglires</taxon>
        <taxon>Primates</taxon>
        <taxon>Haplorrhini</taxon>
        <taxon>Catarrhini</taxon>
        <taxon>Hominidae</taxon>
        <taxon>Homo</taxon>
    </lineage>
</organism>